<name>Y1223_CLOK1</name>
<proteinExistence type="inferred from homology"/>
<reference key="1">
    <citation type="submission" date="2005-09" db="EMBL/GenBank/DDBJ databases">
        <title>Complete genome sequence of Clostridium kluyveri and comparative genomics of Clostridia species.</title>
        <authorList>
            <person name="Inui M."/>
            <person name="Nonaka H."/>
            <person name="Shinoda Y."/>
            <person name="Ikenaga Y."/>
            <person name="Abe M."/>
            <person name="Naito K."/>
            <person name="Vertes A.A."/>
            <person name="Yukawa H."/>
        </authorList>
    </citation>
    <scope>NUCLEOTIDE SEQUENCE [LARGE SCALE GENOMIC DNA]</scope>
    <source>
        <strain>NBRC 12016</strain>
    </source>
</reference>
<dbReference type="EMBL" id="AP009049">
    <property type="protein sequence ID" value="BAH06274.1"/>
    <property type="molecule type" value="Genomic_DNA"/>
</dbReference>
<dbReference type="RefSeq" id="WP_012101714.1">
    <property type="nucleotide sequence ID" value="NC_011837.1"/>
</dbReference>
<dbReference type="KEGG" id="ckr:CKR_1223"/>
<dbReference type="HOGENOM" id="CLU_146610_8_0_9"/>
<dbReference type="Proteomes" id="UP000007969">
    <property type="component" value="Chromosome"/>
</dbReference>
<dbReference type="HAMAP" id="MF_01448">
    <property type="entry name" value="UPF0473"/>
    <property type="match status" value="1"/>
</dbReference>
<dbReference type="InterPro" id="IPR009711">
    <property type="entry name" value="UPF0473"/>
</dbReference>
<dbReference type="Pfam" id="PF06949">
    <property type="entry name" value="DUF1292"/>
    <property type="match status" value="1"/>
</dbReference>
<protein>
    <recommendedName>
        <fullName evidence="1">UPF0473 protein CKR_1223</fullName>
    </recommendedName>
</protein>
<accession>B9E199</accession>
<sequence>MENDVSSLMLEDEKGDKVKFQVVTKFDIEDREYIIVVPEENEDSKEAIVLKIVEGEDGREAFITVEDDEEFNQVSEVYEALFND</sequence>
<comment type="similarity">
    <text evidence="1">Belongs to the UPF0473 family.</text>
</comment>
<organism>
    <name type="scientific">Clostridium kluyveri (strain NBRC 12016)</name>
    <dbReference type="NCBI Taxonomy" id="583346"/>
    <lineage>
        <taxon>Bacteria</taxon>
        <taxon>Bacillati</taxon>
        <taxon>Bacillota</taxon>
        <taxon>Clostridia</taxon>
        <taxon>Eubacteriales</taxon>
        <taxon>Clostridiaceae</taxon>
        <taxon>Clostridium</taxon>
    </lineage>
</organism>
<gene>
    <name type="ordered locus">CKR_1223</name>
</gene>
<evidence type="ECO:0000255" key="1">
    <source>
        <dbReference type="HAMAP-Rule" id="MF_01448"/>
    </source>
</evidence>
<feature type="chain" id="PRO_1000184996" description="UPF0473 protein CKR_1223">
    <location>
        <begin position="1"/>
        <end position="84"/>
    </location>
</feature>